<comment type="function">
    <text evidence="1">This protein is involved in the repair of mismatches in DNA. It is required for dam-dependent methyl-directed DNA mismatch repair. May act as a 'molecular matchmaker', a protein that promotes the formation of a stable complex between two or more DNA-binding proteins in an ATP-dependent manner without itself being part of a final effector complex.</text>
</comment>
<comment type="similarity">
    <text evidence="1">Belongs to the DNA mismatch repair MutL/HexB family.</text>
</comment>
<keyword id="KW-0227">DNA damage</keyword>
<keyword id="KW-0234">DNA repair</keyword>
<keyword id="KW-1185">Reference proteome</keyword>
<protein>
    <recommendedName>
        <fullName evidence="1">DNA mismatch repair protein MutL</fullName>
    </recommendedName>
</protein>
<gene>
    <name evidence="1" type="primary">mutL</name>
    <name type="ordered locus">BAV0725</name>
</gene>
<proteinExistence type="inferred from homology"/>
<organism>
    <name type="scientific">Bordetella avium (strain 197N)</name>
    <dbReference type="NCBI Taxonomy" id="360910"/>
    <lineage>
        <taxon>Bacteria</taxon>
        <taxon>Pseudomonadati</taxon>
        <taxon>Pseudomonadota</taxon>
        <taxon>Betaproteobacteria</taxon>
        <taxon>Burkholderiales</taxon>
        <taxon>Alcaligenaceae</taxon>
        <taxon>Bordetella</taxon>
    </lineage>
</organism>
<name>MUTL_BORA1</name>
<reference key="1">
    <citation type="journal article" date="2006" name="J. Bacteriol.">
        <title>Comparison of the genome sequence of the poultry pathogen Bordetella avium with those of B. bronchiseptica, B. pertussis, and B. parapertussis reveals extensive diversity in surface structures associated with host interaction.</title>
        <authorList>
            <person name="Sebaihia M."/>
            <person name="Preston A."/>
            <person name="Maskell D.J."/>
            <person name="Kuzmiak H."/>
            <person name="Connell T.D."/>
            <person name="King N.D."/>
            <person name="Orndorff P.E."/>
            <person name="Miyamoto D.M."/>
            <person name="Thomson N.R."/>
            <person name="Harris D."/>
            <person name="Goble A."/>
            <person name="Lord A."/>
            <person name="Murphy L."/>
            <person name="Quail M.A."/>
            <person name="Rutter S."/>
            <person name="Squares R."/>
            <person name="Squares S."/>
            <person name="Woodward J."/>
            <person name="Parkhill J."/>
            <person name="Temple L.M."/>
        </authorList>
    </citation>
    <scope>NUCLEOTIDE SEQUENCE [LARGE SCALE GENOMIC DNA]</scope>
    <source>
        <strain>197N</strain>
    </source>
</reference>
<evidence type="ECO:0000255" key="1">
    <source>
        <dbReference type="HAMAP-Rule" id="MF_00149"/>
    </source>
</evidence>
<evidence type="ECO:0000256" key="2">
    <source>
        <dbReference type="SAM" id="MobiDB-lite"/>
    </source>
</evidence>
<feature type="chain" id="PRO_1000009988" description="DNA mismatch repair protein MutL">
    <location>
        <begin position="1"/>
        <end position="621"/>
    </location>
</feature>
<feature type="region of interest" description="Disordered" evidence="2">
    <location>
        <begin position="329"/>
        <end position="381"/>
    </location>
</feature>
<feature type="region of interest" description="Disordered" evidence="2">
    <location>
        <begin position="403"/>
        <end position="422"/>
    </location>
</feature>
<feature type="compositionally biased region" description="Pro residues" evidence="2">
    <location>
        <begin position="341"/>
        <end position="354"/>
    </location>
</feature>
<feature type="compositionally biased region" description="Pro residues" evidence="2">
    <location>
        <begin position="364"/>
        <end position="374"/>
    </location>
</feature>
<sequence>MYERRPIAQLPDLLISQIAAGEVIERPASVLKEILENAIDAGARAIEIRLEGGGIRRIAVSDDGFGIPPEELPLAVAQHATSKIRSLSELESVASMGFRGEALASIASVARLTIISRVRNGDHAWQIDASSGEISPASGPPGTTVDVRQLFDNVPARRKFLRSEATEFGHCLDALERIALANPQIAFRLFHHDKAQRQWLPADPGQRIRDVLGAEFAGQALPVDTRYGAIGLMGMVTRPTAARARADRQYLYVNGRYVRDRTVSHALRSAYADVLHGDRQPAYVLYLEVDPAAVDVNVHPAKHEVRFRDSGAVHRFVSQVVGQALAQTGGAQALDAEDPPPEPIRPETPPPPSLSPAAALPSAPAQPPAAPYPSRPHSQMPFRLQEPAGVSARDWQSLYRPLAEPGATPQTADRPQAAAPARLVSEEEHPLGMALGQLHGVYILAQNARGLVLVDMHAAHERVVYEQLKHALDERSLPRQDLLVPVVFHAQEKDVALAEEYAEQLSELGFEMRPSGPTSIAVRSVPALLARGDIEGLARAVLRDLGAVGASQLLTEQRNELLSTMACHGSVRANRRLTIEEMNALLRQMEATERADQCNHGRPTWIQWTVNDLDKLFLRGQ</sequence>
<dbReference type="EMBL" id="AM167904">
    <property type="protein sequence ID" value="CAJ48337.1"/>
    <property type="molecule type" value="Genomic_DNA"/>
</dbReference>
<dbReference type="RefSeq" id="WP_012416421.1">
    <property type="nucleotide sequence ID" value="NC_010645.1"/>
</dbReference>
<dbReference type="SMR" id="Q2KX20"/>
<dbReference type="STRING" id="360910.BAV0725"/>
<dbReference type="KEGG" id="bav:BAV0725"/>
<dbReference type="eggNOG" id="COG0323">
    <property type="taxonomic scope" value="Bacteria"/>
</dbReference>
<dbReference type="HOGENOM" id="CLU_004131_4_2_4"/>
<dbReference type="OrthoDB" id="9763467at2"/>
<dbReference type="Proteomes" id="UP000001977">
    <property type="component" value="Chromosome"/>
</dbReference>
<dbReference type="GO" id="GO:0032300">
    <property type="term" value="C:mismatch repair complex"/>
    <property type="evidence" value="ECO:0007669"/>
    <property type="project" value="InterPro"/>
</dbReference>
<dbReference type="GO" id="GO:0005524">
    <property type="term" value="F:ATP binding"/>
    <property type="evidence" value="ECO:0007669"/>
    <property type="project" value="InterPro"/>
</dbReference>
<dbReference type="GO" id="GO:0016887">
    <property type="term" value="F:ATP hydrolysis activity"/>
    <property type="evidence" value="ECO:0007669"/>
    <property type="project" value="InterPro"/>
</dbReference>
<dbReference type="GO" id="GO:0140664">
    <property type="term" value="F:ATP-dependent DNA damage sensor activity"/>
    <property type="evidence" value="ECO:0007669"/>
    <property type="project" value="InterPro"/>
</dbReference>
<dbReference type="GO" id="GO:0030983">
    <property type="term" value="F:mismatched DNA binding"/>
    <property type="evidence" value="ECO:0007669"/>
    <property type="project" value="InterPro"/>
</dbReference>
<dbReference type="GO" id="GO:0006298">
    <property type="term" value="P:mismatch repair"/>
    <property type="evidence" value="ECO:0007669"/>
    <property type="project" value="UniProtKB-UniRule"/>
</dbReference>
<dbReference type="CDD" id="cd16926">
    <property type="entry name" value="HATPase_MutL-MLH-PMS-like"/>
    <property type="match status" value="1"/>
</dbReference>
<dbReference type="CDD" id="cd03482">
    <property type="entry name" value="MutL_Trans_MutL"/>
    <property type="match status" value="1"/>
</dbReference>
<dbReference type="FunFam" id="3.30.565.10:FF:000003">
    <property type="entry name" value="DNA mismatch repair endonuclease MutL"/>
    <property type="match status" value="1"/>
</dbReference>
<dbReference type="Gene3D" id="3.30.230.10">
    <property type="match status" value="1"/>
</dbReference>
<dbReference type="Gene3D" id="3.30.565.10">
    <property type="entry name" value="Histidine kinase-like ATPase, C-terminal domain"/>
    <property type="match status" value="1"/>
</dbReference>
<dbReference type="Gene3D" id="3.30.1540.20">
    <property type="entry name" value="MutL, C-terminal domain, dimerisation subdomain"/>
    <property type="match status" value="1"/>
</dbReference>
<dbReference type="Gene3D" id="3.30.1370.100">
    <property type="entry name" value="MutL, C-terminal domain, regulatory subdomain"/>
    <property type="match status" value="1"/>
</dbReference>
<dbReference type="HAMAP" id="MF_00149">
    <property type="entry name" value="DNA_mis_repair"/>
    <property type="match status" value="1"/>
</dbReference>
<dbReference type="InterPro" id="IPR014762">
    <property type="entry name" value="DNA_mismatch_repair_CS"/>
</dbReference>
<dbReference type="InterPro" id="IPR020667">
    <property type="entry name" value="DNA_mismatch_repair_MutL"/>
</dbReference>
<dbReference type="InterPro" id="IPR013507">
    <property type="entry name" value="DNA_mismatch_S5_2-like"/>
</dbReference>
<dbReference type="InterPro" id="IPR036890">
    <property type="entry name" value="HATPase_C_sf"/>
</dbReference>
<dbReference type="InterPro" id="IPR002099">
    <property type="entry name" value="MutL/Mlh/PMS"/>
</dbReference>
<dbReference type="InterPro" id="IPR038973">
    <property type="entry name" value="MutL/Mlh/Pms-like"/>
</dbReference>
<dbReference type="InterPro" id="IPR014790">
    <property type="entry name" value="MutL_C"/>
</dbReference>
<dbReference type="InterPro" id="IPR042120">
    <property type="entry name" value="MutL_C_dimsub"/>
</dbReference>
<dbReference type="InterPro" id="IPR042121">
    <property type="entry name" value="MutL_C_regsub"/>
</dbReference>
<dbReference type="InterPro" id="IPR037198">
    <property type="entry name" value="MutL_C_sf"/>
</dbReference>
<dbReference type="InterPro" id="IPR020568">
    <property type="entry name" value="Ribosomal_Su5_D2-typ_SF"/>
</dbReference>
<dbReference type="InterPro" id="IPR014721">
    <property type="entry name" value="Ribsml_uS5_D2-typ_fold_subgr"/>
</dbReference>
<dbReference type="NCBIfam" id="TIGR00585">
    <property type="entry name" value="mutl"/>
    <property type="match status" value="1"/>
</dbReference>
<dbReference type="NCBIfam" id="NF000949">
    <property type="entry name" value="PRK00095.1-2"/>
    <property type="match status" value="1"/>
</dbReference>
<dbReference type="PANTHER" id="PTHR10073">
    <property type="entry name" value="DNA MISMATCH REPAIR PROTEIN MLH, PMS, MUTL"/>
    <property type="match status" value="1"/>
</dbReference>
<dbReference type="PANTHER" id="PTHR10073:SF12">
    <property type="entry name" value="DNA MISMATCH REPAIR PROTEIN MLH1"/>
    <property type="match status" value="1"/>
</dbReference>
<dbReference type="Pfam" id="PF01119">
    <property type="entry name" value="DNA_mis_repair"/>
    <property type="match status" value="1"/>
</dbReference>
<dbReference type="Pfam" id="PF13589">
    <property type="entry name" value="HATPase_c_3"/>
    <property type="match status" value="1"/>
</dbReference>
<dbReference type="Pfam" id="PF08676">
    <property type="entry name" value="MutL_C"/>
    <property type="match status" value="1"/>
</dbReference>
<dbReference type="SMART" id="SM01340">
    <property type="entry name" value="DNA_mis_repair"/>
    <property type="match status" value="1"/>
</dbReference>
<dbReference type="SMART" id="SM00853">
    <property type="entry name" value="MutL_C"/>
    <property type="match status" value="1"/>
</dbReference>
<dbReference type="SUPFAM" id="SSF55874">
    <property type="entry name" value="ATPase domain of HSP90 chaperone/DNA topoisomerase II/histidine kinase"/>
    <property type="match status" value="1"/>
</dbReference>
<dbReference type="SUPFAM" id="SSF118116">
    <property type="entry name" value="DNA mismatch repair protein MutL"/>
    <property type="match status" value="1"/>
</dbReference>
<dbReference type="SUPFAM" id="SSF54211">
    <property type="entry name" value="Ribosomal protein S5 domain 2-like"/>
    <property type="match status" value="1"/>
</dbReference>
<dbReference type="PROSITE" id="PS00058">
    <property type="entry name" value="DNA_MISMATCH_REPAIR_1"/>
    <property type="match status" value="1"/>
</dbReference>
<accession>Q2KX20</accession>